<feature type="chain" id="PRO_0000161028" description="Histidine ammonia-lyase">
    <location>
        <begin position="1"/>
        <end position="512"/>
    </location>
</feature>
<feature type="modified residue" description="2,3-didehydroalanine (Ser)" evidence="1">
    <location>
        <position position="144"/>
    </location>
</feature>
<feature type="cross-link" description="5-imidazolinone (Ala-Gly)" evidence="1">
    <location>
        <begin position="143"/>
        <end position="145"/>
    </location>
</feature>
<reference key="1">
    <citation type="journal article" date="2004" name="Nature">
        <title>Genome sequence of Silicibacter pomeroyi reveals adaptations to the marine environment.</title>
        <authorList>
            <person name="Moran M.A."/>
            <person name="Buchan A."/>
            <person name="Gonzalez J.M."/>
            <person name="Heidelberg J.F."/>
            <person name="Whitman W.B."/>
            <person name="Kiene R.P."/>
            <person name="Henriksen J.R."/>
            <person name="King G.M."/>
            <person name="Belas R."/>
            <person name="Fuqua C."/>
            <person name="Brinkac L.M."/>
            <person name="Lewis M."/>
            <person name="Johri S."/>
            <person name="Weaver B."/>
            <person name="Pai G."/>
            <person name="Eisen J.A."/>
            <person name="Rahe E."/>
            <person name="Sheldon W.M."/>
            <person name="Ye W."/>
            <person name="Miller T.R."/>
            <person name="Carlton J."/>
            <person name="Rasko D.A."/>
            <person name="Paulsen I.T."/>
            <person name="Ren Q."/>
            <person name="Daugherty S.C."/>
            <person name="DeBoy R.T."/>
            <person name="Dodson R.J."/>
            <person name="Durkin A.S."/>
            <person name="Madupu R."/>
            <person name="Nelson W.C."/>
            <person name="Sullivan S.A."/>
            <person name="Rosovitz M.J."/>
            <person name="Haft D.H."/>
            <person name="Selengut J."/>
            <person name="Ward N."/>
        </authorList>
    </citation>
    <scope>NUCLEOTIDE SEQUENCE [LARGE SCALE GENOMIC DNA]</scope>
    <source>
        <strain>ATCC 700808 / DSM 15171 / DSS-3</strain>
    </source>
</reference>
<reference key="2">
    <citation type="journal article" date="2014" name="Stand. Genomic Sci.">
        <title>An updated genome annotation for the model marine bacterium Ruegeria pomeroyi DSS-3.</title>
        <authorList>
            <person name="Rivers A.R."/>
            <person name="Smith C.B."/>
            <person name="Moran M.A."/>
        </authorList>
    </citation>
    <scope>GENOME REANNOTATION</scope>
    <source>
        <strain>ATCC 700808 / DSM 15171 / DSS-3</strain>
    </source>
</reference>
<accession>Q5LRD8</accession>
<dbReference type="EC" id="4.3.1.3" evidence="1"/>
<dbReference type="EMBL" id="CP000031">
    <property type="protein sequence ID" value="AAV95458.1"/>
    <property type="molecule type" value="Genomic_DNA"/>
</dbReference>
<dbReference type="SMR" id="Q5LRD8"/>
<dbReference type="STRING" id="246200.SPO2192"/>
<dbReference type="PaxDb" id="246200-SPO2192"/>
<dbReference type="KEGG" id="sil:SPO2192"/>
<dbReference type="eggNOG" id="COG2986">
    <property type="taxonomic scope" value="Bacteria"/>
</dbReference>
<dbReference type="HOGENOM" id="CLU_014801_4_0_5"/>
<dbReference type="OrthoDB" id="9806955at2"/>
<dbReference type="UniPathway" id="UPA00379">
    <property type="reaction ID" value="UER00549"/>
</dbReference>
<dbReference type="Proteomes" id="UP000001023">
    <property type="component" value="Chromosome"/>
</dbReference>
<dbReference type="GO" id="GO:0005737">
    <property type="term" value="C:cytoplasm"/>
    <property type="evidence" value="ECO:0007669"/>
    <property type="project" value="UniProtKB-SubCell"/>
</dbReference>
<dbReference type="GO" id="GO:0004397">
    <property type="term" value="F:histidine ammonia-lyase activity"/>
    <property type="evidence" value="ECO:0007669"/>
    <property type="project" value="UniProtKB-UniRule"/>
</dbReference>
<dbReference type="GO" id="GO:0019556">
    <property type="term" value="P:L-histidine catabolic process to glutamate and formamide"/>
    <property type="evidence" value="ECO:0007669"/>
    <property type="project" value="UniProtKB-UniPathway"/>
</dbReference>
<dbReference type="GO" id="GO:0019557">
    <property type="term" value="P:L-histidine catabolic process to glutamate and formate"/>
    <property type="evidence" value="ECO:0007669"/>
    <property type="project" value="UniProtKB-UniPathway"/>
</dbReference>
<dbReference type="CDD" id="cd00332">
    <property type="entry name" value="PAL-HAL"/>
    <property type="match status" value="1"/>
</dbReference>
<dbReference type="FunFam" id="1.10.275.10:FF:000005">
    <property type="entry name" value="Histidine ammonia-lyase"/>
    <property type="match status" value="1"/>
</dbReference>
<dbReference type="FunFam" id="1.20.200.10:FF:000003">
    <property type="entry name" value="Histidine ammonia-lyase"/>
    <property type="match status" value="1"/>
</dbReference>
<dbReference type="Gene3D" id="1.20.200.10">
    <property type="entry name" value="Fumarase/aspartase (Central domain)"/>
    <property type="match status" value="1"/>
</dbReference>
<dbReference type="Gene3D" id="1.10.275.10">
    <property type="entry name" value="Fumarase/aspartase (N-terminal domain)"/>
    <property type="match status" value="1"/>
</dbReference>
<dbReference type="HAMAP" id="MF_00229">
    <property type="entry name" value="His_ammonia_lyase"/>
    <property type="match status" value="1"/>
</dbReference>
<dbReference type="InterPro" id="IPR001106">
    <property type="entry name" value="Aromatic_Lyase"/>
</dbReference>
<dbReference type="InterPro" id="IPR024083">
    <property type="entry name" value="Fumarase/histidase_N"/>
</dbReference>
<dbReference type="InterPro" id="IPR005921">
    <property type="entry name" value="HutH"/>
</dbReference>
<dbReference type="InterPro" id="IPR008948">
    <property type="entry name" value="L-Aspartase-like"/>
</dbReference>
<dbReference type="InterPro" id="IPR022313">
    <property type="entry name" value="Phe/His_NH3-lyase_AS"/>
</dbReference>
<dbReference type="NCBIfam" id="TIGR01225">
    <property type="entry name" value="hutH"/>
    <property type="match status" value="1"/>
</dbReference>
<dbReference type="NCBIfam" id="NF006871">
    <property type="entry name" value="PRK09367.1"/>
    <property type="match status" value="1"/>
</dbReference>
<dbReference type="PANTHER" id="PTHR10362">
    <property type="entry name" value="HISTIDINE AMMONIA-LYASE"/>
    <property type="match status" value="1"/>
</dbReference>
<dbReference type="Pfam" id="PF00221">
    <property type="entry name" value="Lyase_aromatic"/>
    <property type="match status" value="1"/>
</dbReference>
<dbReference type="SUPFAM" id="SSF48557">
    <property type="entry name" value="L-aspartase-like"/>
    <property type="match status" value="1"/>
</dbReference>
<dbReference type="PROSITE" id="PS00488">
    <property type="entry name" value="PAL_HISTIDASE"/>
    <property type="match status" value="1"/>
</dbReference>
<organism>
    <name type="scientific">Ruegeria pomeroyi (strain ATCC 700808 / DSM 15171 / DSS-3)</name>
    <name type="common">Silicibacter pomeroyi</name>
    <dbReference type="NCBI Taxonomy" id="246200"/>
    <lineage>
        <taxon>Bacteria</taxon>
        <taxon>Pseudomonadati</taxon>
        <taxon>Pseudomonadota</taxon>
        <taxon>Alphaproteobacteria</taxon>
        <taxon>Rhodobacterales</taxon>
        <taxon>Roseobacteraceae</taxon>
        <taxon>Ruegeria</taxon>
    </lineage>
</organism>
<comment type="catalytic activity">
    <reaction evidence="1">
        <text>L-histidine = trans-urocanate + NH4(+)</text>
        <dbReference type="Rhea" id="RHEA:21232"/>
        <dbReference type="ChEBI" id="CHEBI:17771"/>
        <dbReference type="ChEBI" id="CHEBI:28938"/>
        <dbReference type="ChEBI" id="CHEBI:57595"/>
        <dbReference type="EC" id="4.3.1.3"/>
    </reaction>
</comment>
<comment type="pathway">
    <text evidence="1">Amino-acid degradation; L-histidine degradation into L-glutamate; N-formimidoyl-L-glutamate from L-histidine: step 1/3.</text>
</comment>
<comment type="subcellular location">
    <subcellularLocation>
        <location evidence="1">Cytoplasm</location>
    </subcellularLocation>
</comment>
<comment type="PTM">
    <text evidence="1">Contains an active site 4-methylidene-imidazol-5-one (MIO), which is formed autocatalytically by cyclization and dehydration of residues Ala-Ser-Gly.</text>
</comment>
<comment type="similarity">
    <text evidence="1">Belongs to the PAL/histidase family.</text>
</comment>
<gene>
    <name evidence="1" type="primary">hutH</name>
    <name type="ordered locus">SPO2192</name>
</gene>
<protein>
    <recommendedName>
        <fullName evidence="1">Histidine ammonia-lyase</fullName>
        <shortName evidence="1">Histidase</shortName>
        <ecNumber evidence="1">4.3.1.3</ecNumber>
    </recommendedName>
</protein>
<evidence type="ECO:0000255" key="1">
    <source>
        <dbReference type="HAMAP-Rule" id="MF_00229"/>
    </source>
</evidence>
<name>HUTH_RUEPO</name>
<keyword id="KW-0963">Cytoplasm</keyword>
<keyword id="KW-0369">Histidine metabolism</keyword>
<keyword id="KW-0456">Lyase</keyword>
<keyword id="KW-1185">Reference proteome</keyword>
<sequence>MTALTLTPGSATLEHLARIYFDESPVRLDPACRPAVEAAAARIRAAAAGDVPVYGVNTGFGKLASLKVAPQDTATLQRNLILSHCCGVGAPIPRRMARLMMVLKLLSLGRGASGVRWELITLLQEMLARDVTPVIPVQGSVGASGDLAPLAHMTAVIIGAGEAEYQGQRLPGAEALARAGLTPIALGPKEGLAFINGTQFSTAFALAGLFGAWRAATSSLVTAALSTDAIMGSTAPLQPEIHALRGHRGQIDAAARMRALLDGSEIRESHREGDTRVQDPYCIRCQPQVTGAAMDVLRQAAQTLEIEANAATDNPLVLAEADMIVSGGNFHAEPVGFAADLIALALSEIGAIAQRRVALMVDPTLSFDLPPFLTPKPGLNSGLMIAEVTTAALMSENKHLANPCVTDSTPTSANQEDHVSMAAHGAVRLGRMVENLHYILGVELLCAAQGIEFRAPLQTSTALQAAVARLRAEVPRLEEDRYMAPEIETAARLVGAGALLDVVGIDMGGLRP</sequence>
<proteinExistence type="inferred from homology"/>